<name>CALM_ANAPL</name>
<keyword id="KW-0002">3D-structure</keyword>
<keyword id="KW-0007">Acetylation</keyword>
<keyword id="KW-0106">Calcium</keyword>
<keyword id="KW-0479">Metal-binding</keyword>
<keyword id="KW-0488">Methylation</keyword>
<keyword id="KW-0677">Repeat</keyword>
<protein>
    <recommendedName>
        <fullName>Calmodulin</fullName>
        <shortName>CaM</shortName>
    </recommendedName>
</protein>
<comment type="function">
    <text evidence="1">Calmodulin acts as part of a calcium signal transduction pathway by mediating the control of a large number of enzymes, ion channels, aquaporins and other proteins through calcium-binding. Calcium-binding is required for the activation of calmodulin. Among the enzymes to be stimulated by the calmodulin-calcium complex are a number of protein kinases, such as myosin light-chain kinases and calmodulin-dependent protein kinase type II (CaMK2), and phosphatases.</text>
</comment>
<comment type="miscellaneous">
    <text>This protein has four functional calcium-binding sites.</text>
</comment>
<comment type="similarity">
    <text evidence="3">Belongs to the calmodulin family.</text>
</comment>
<proteinExistence type="evidence at protein level"/>
<evidence type="ECO:0000250" key="1">
    <source>
        <dbReference type="UniProtKB" id="P0DP23"/>
    </source>
</evidence>
<evidence type="ECO:0000255" key="2">
    <source>
        <dbReference type="PROSITE-ProRule" id="PRU00448"/>
    </source>
</evidence>
<evidence type="ECO:0000305" key="3"/>
<evidence type="ECO:0007829" key="4">
    <source>
        <dbReference type="PDB" id="1UP5"/>
    </source>
</evidence>
<accession>P62144</accession>
<accession>P02593</accession>
<accession>P70667</accession>
<accession>P99014</accession>
<accession>Q61379</accession>
<accession>Q61380</accession>
<sequence>MADQLTEEQIAEFKEAFSLFDKDGDGTITTKELGTVMRSLGQNPTEAELQDMINEVDADGNGTIDFPEFLTMMARKMKDTDSEEEIREAFRVFDKDGNGYISAAELRHVMTNLGEKLTDEEVDEMIREADIDGDGQVNYEEFVQMMTAK</sequence>
<gene>
    <name type="primary">CALM</name>
    <name type="synonym">CAM</name>
</gene>
<dbReference type="EMBL" id="D83350">
    <property type="protein sequence ID" value="BAA11896.1"/>
    <property type="molecule type" value="mRNA"/>
</dbReference>
<dbReference type="PIR" id="I51202">
    <property type="entry name" value="I51202"/>
</dbReference>
<dbReference type="PDB" id="1UP5">
    <property type="method" value="X-ray"/>
    <property type="resolution" value="1.90 A"/>
    <property type="chains" value="A/B=2-149"/>
</dbReference>
<dbReference type="PDBsum" id="1UP5"/>
<dbReference type="BMRB" id="P62144"/>
<dbReference type="SMR" id="P62144"/>
<dbReference type="Ensembl" id="ENSAPLT00020007544.1">
    <property type="protein sequence ID" value="ENSAPLP00020007025.1"/>
    <property type="gene ID" value="ENSAPLG00020005121.1"/>
</dbReference>
<dbReference type="Ensembl" id="ENSAPLT00020007678.1">
    <property type="protein sequence ID" value="ENSAPLP00020007147.1"/>
    <property type="gene ID" value="ENSAPLG00020005235.1"/>
</dbReference>
<dbReference type="OMA" id="RIDCESI"/>
<dbReference type="OrthoDB" id="26525at2759"/>
<dbReference type="Proteomes" id="UP000694400">
    <property type="component" value="Chromosome 3"/>
</dbReference>
<dbReference type="Proteomes" id="UP000694400">
    <property type="component" value="Chromosome 5"/>
</dbReference>
<dbReference type="GO" id="GO:0016460">
    <property type="term" value="C:myosin II complex"/>
    <property type="evidence" value="ECO:0007669"/>
    <property type="project" value="TreeGrafter"/>
</dbReference>
<dbReference type="GO" id="GO:0005509">
    <property type="term" value="F:calcium ion binding"/>
    <property type="evidence" value="ECO:0007669"/>
    <property type="project" value="InterPro"/>
</dbReference>
<dbReference type="CDD" id="cd00051">
    <property type="entry name" value="EFh"/>
    <property type="match status" value="2"/>
</dbReference>
<dbReference type="FunFam" id="1.10.238.10:FF:000527">
    <property type="entry name" value="Calmodulin-3"/>
    <property type="match status" value="1"/>
</dbReference>
<dbReference type="Gene3D" id="1.10.238.10">
    <property type="entry name" value="EF-hand"/>
    <property type="match status" value="3"/>
</dbReference>
<dbReference type="InterPro" id="IPR050230">
    <property type="entry name" value="CALM/Myosin/TropC-like"/>
</dbReference>
<dbReference type="InterPro" id="IPR011992">
    <property type="entry name" value="EF-hand-dom_pair"/>
</dbReference>
<dbReference type="InterPro" id="IPR018247">
    <property type="entry name" value="EF_Hand_1_Ca_BS"/>
</dbReference>
<dbReference type="InterPro" id="IPR002048">
    <property type="entry name" value="EF_hand_dom"/>
</dbReference>
<dbReference type="PANTHER" id="PTHR23048:SF0">
    <property type="entry name" value="CALMODULIN LIKE 3"/>
    <property type="match status" value="1"/>
</dbReference>
<dbReference type="PANTHER" id="PTHR23048">
    <property type="entry name" value="MYOSIN LIGHT CHAIN 1, 3"/>
    <property type="match status" value="1"/>
</dbReference>
<dbReference type="Pfam" id="PF13499">
    <property type="entry name" value="EF-hand_7"/>
    <property type="match status" value="2"/>
</dbReference>
<dbReference type="PRINTS" id="PR00450">
    <property type="entry name" value="RECOVERIN"/>
</dbReference>
<dbReference type="SMART" id="SM00054">
    <property type="entry name" value="EFh"/>
    <property type="match status" value="4"/>
</dbReference>
<dbReference type="SUPFAM" id="SSF47473">
    <property type="entry name" value="EF-hand"/>
    <property type="match status" value="1"/>
</dbReference>
<dbReference type="PROSITE" id="PS00018">
    <property type="entry name" value="EF_HAND_1"/>
    <property type="match status" value="4"/>
</dbReference>
<dbReference type="PROSITE" id="PS50222">
    <property type="entry name" value="EF_HAND_2"/>
    <property type="match status" value="4"/>
</dbReference>
<feature type="initiator methionine" description="Removed" evidence="1">
    <location>
        <position position="1"/>
    </location>
</feature>
<feature type="chain" id="PRO_0000198229" description="Calmodulin">
    <location>
        <begin position="2"/>
        <end position="149"/>
    </location>
</feature>
<feature type="domain" description="EF-hand 1" evidence="2">
    <location>
        <begin position="8"/>
        <end position="43"/>
    </location>
</feature>
<feature type="domain" description="EF-hand 2" evidence="2">
    <location>
        <begin position="44"/>
        <end position="79"/>
    </location>
</feature>
<feature type="domain" description="EF-hand 3" evidence="2">
    <location>
        <begin position="81"/>
        <end position="116"/>
    </location>
</feature>
<feature type="domain" description="EF-hand 4" evidence="2">
    <location>
        <begin position="117"/>
        <end position="149"/>
    </location>
</feature>
<feature type="binding site" evidence="2">
    <location>
        <position position="21"/>
    </location>
    <ligand>
        <name>Ca(2+)</name>
        <dbReference type="ChEBI" id="CHEBI:29108"/>
        <label>1</label>
    </ligand>
</feature>
<feature type="binding site" evidence="2">
    <location>
        <position position="23"/>
    </location>
    <ligand>
        <name>Ca(2+)</name>
        <dbReference type="ChEBI" id="CHEBI:29108"/>
        <label>1</label>
    </ligand>
</feature>
<feature type="binding site" evidence="2">
    <location>
        <position position="25"/>
    </location>
    <ligand>
        <name>Ca(2+)</name>
        <dbReference type="ChEBI" id="CHEBI:29108"/>
        <label>1</label>
    </ligand>
</feature>
<feature type="binding site" evidence="2">
    <location>
        <position position="27"/>
    </location>
    <ligand>
        <name>Ca(2+)</name>
        <dbReference type="ChEBI" id="CHEBI:29108"/>
        <label>1</label>
    </ligand>
</feature>
<feature type="binding site" evidence="2">
    <location>
        <position position="32"/>
    </location>
    <ligand>
        <name>Ca(2+)</name>
        <dbReference type="ChEBI" id="CHEBI:29108"/>
        <label>1</label>
    </ligand>
</feature>
<feature type="binding site" evidence="2">
    <location>
        <position position="57"/>
    </location>
    <ligand>
        <name>Ca(2+)</name>
        <dbReference type="ChEBI" id="CHEBI:29108"/>
        <label>2</label>
    </ligand>
</feature>
<feature type="binding site" evidence="2">
    <location>
        <position position="59"/>
    </location>
    <ligand>
        <name>Ca(2+)</name>
        <dbReference type="ChEBI" id="CHEBI:29108"/>
        <label>2</label>
    </ligand>
</feature>
<feature type="binding site" evidence="2">
    <location>
        <position position="61"/>
    </location>
    <ligand>
        <name>Ca(2+)</name>
        <dbReference type="ChEBI" id="CHEBI:29108"/>
        <label>2</label>
    </ligand>
</feature>
<feature type="binding site" evidence="2">
    <location>
        <position position="63"/>
    </location>
    <ligand>
        <name>Ca(2+)</name>
        <dbReference type="ChEBI" id="CHEBI:29108"/>
        <label>2</label>
    </ligand>
</feature>
<feature type="binding site" evidence="2">
    <location>
        <position position="68"/>
    </location>
    <ligand>
        <name>Ca(2+)</name>
        <dbReference type="ChEBI" id="CHEBI:29108"/>
        <label>2</label>
    </ligand>
</feature>
<feature type="binding site" evidence="2">
    <location>
        <position position="94"/>
    </location>
    <ligand>
        <name>Ca(2+)</name>
        <dbReference type="ChEBI" id="CHEBI:29108"/>
        <label>3</label>
    </ligand>
</feature>
<feature type="binding site" evidence="2">
    <location>
        <position position="96"/>
    </location>
    <ligand>
        <name>Ca(2+)</name>
        <dbReference type="ChEBI" id="CHEBI:29108"/>
        <label>3</label>
    </ligand>
</feature>
<feature type="binding site" evidence="2">
    <location>
        <position position="98"/>
    </location>
    <ligand>
        <name>Ca(2+)</name>
        <dbReference type="ChEBI" id="CHEBI:29108"/>
        <label>3</label>
    </ligand>
</feature>
<feature type="binding site" evidence="2">
    <location>
        <position position="100"/>
    </location>
    <ligand>
        <name>Ca(2+)</name>
        <dbReference type="ChEBI" id="CHEBI:29108"/>
        <label>3</label>
    </ligand>
</feature>
<feature type="binding site" evidence="2">
    <location>
        <position position="105"/>
    </location>
    <ligand>
        <name>Ca(2+)</name>
        <dbReference type="ChEBI" id="CHEBI:29108"/>
        <label>3</label>
    </ligand>
</feature>
<feature type="binding site" evidence="2">
    <location>
        <position position="130"/>
    </location>
    <ligand>
        <name>Ca(2+)</name>
        <dbReference type="ChEBI" id="CHEBI:29108"/>
        <label>4</label>
    </ligand>
</feature>
<feature type="binding site" evidence="2">
    <location>
        <position position="132"/>
    </location>
    <ligand>
        <name>Ca(2+)</name>
        <dbReference type="ChEBI" id="CHEBI:29108"/>
        <label>4</label>
    </ligand>
</feature>
<feature type="binding site" evidence="2">
    <location>
        <position position="134"/>
    </location>
    <ligand>
        <name>Ca(2+)</name>
        <dbReference type="ChEBI" id="CHEBI:29108"/>
        <label>4</label>
    </ligand>
</feature>
<feature type="binding site" evidence="2">
    <location>
        <position position="136"/>
    </location>
    <ligand>
        <name>Ca(2+)</name>
        <dbReference type="ChEBI" id="CHEBI:29108"/>
        <label>4</label>
    </ligand>
</feature>
<feature type="binding site" evidence="2">
    <location>
        <position position="141"/>
    </location>
    <ligand>
        <name>Ca(2+)</name>
        <dbReference type="ChEBI" id="CHEBI:29108"/>
        <label>4</label>
    </ligand>
</feature>
<feature type="modified residue" description="N-acetylalanine" evidence="1">
    <location>
        <position position="2"/>
    </location>
</feature>
<feature type="modified residue" description="N6,N6,N6-trimethyllysine" evidence="1">
    <location>
        <position position="116"/>
    </location>
</feature>
<feature type="helix" evidence="4">
    <location>
        <begin position="7"/>
        <end position="20"/>
    </location>
</feature>
<feature type="strand" evidence="4">
    <location>
        <begin position="25"/>
        <end position="28"/>
    </location>
</feature>
<feature type="helix" evidence="4">
    <location>
        <begin position="30"/>
        <end position="39"/>
    </location>
</feature>
<feature type="helix" evidence="4">
    <location>
        <begin position="46"/>
        <end position="56"/>
    </location>
</feature>
<feature type="strand" evidence="4">
    <location>
        <begin position="61"/>
        <end position="65"/>
    </location>
</feature>
<feature type="helix" evidence="4">
    <location>
        <begin position="66"/>
        <end position="93"/>
    </location>
</feature>
<feature type="helix" evidence="4">
    <location>
        <begin position="103"/>
        <end position="112"/>
    </location>
</feature>
<feature type="helix" evidence="4">
    <location>
        <begin position="119"/>
        <end position="129"/>
    </location>
</feature>
<feature type="strand" evidence="4">
    <location>
        <begin position="134"/>
        <end position="137"/>
    </location>
</feature>
<feature type="helix" evidence="4">
    <location>
        <begin position="139"/>
        <end position="146"/>
    </location>
</feature>
<reference key="1">
    <citation type="journal article" date="1993" name="Brain Res. Mol. Brain Res.">
        <title>Molecular cloning of the kainate-binding protein and calmodulin genes which are induced by an imprinting stimulus in ducklings.</title>
        <authorList>
            <person name="Kimura N."/>
            <person name="Kurosawa N."/>
            <person name="Kondo K."/>
            <person name="Tsukada Y."/>
        </authorList>
    </citation>
    <scope>NUCLEOTIDE SEQUENCE [MRNA]</scope>
</reference>
<organism>
    <name type="scientific">Anas platyrhynchos</name>
    <name type="common">Mallard</name>
    <name type="synonym">Anas boschas</name>
    <dbReference type="NCBI Taxonomy" id="8839"/>
    <lineage>
        <taxon>Eukaryota</taxon>
        <taxon>Metazoa</taxon>
        <taxon>Chordata</taxon>
        <taxon>Craniata</taxon>
        <taxon>Vertebrata</taxon>
        <taxon>Euteleostomi</taxon>
        <taxon>Archelosauria</taxon>
        <taxon>Archosauria</taxon>
        <taxon>Dinosauria</taxon>
        <taxon>Saurischia</taxon>
        <taxon>Theropoda</taxon>
        <taxon>Coelurosauria</taxon>
        <taxon>Aves</taxon>
        <taxon>Neognathae</taxon>
        <taxon>Galloanserae</taxon>
        <taxon>Anseriformes</taxon>
        <taxon>Anatidae</taxon>
        <taxon>Anatinae</taxon>
        <taxon>Anas</taxon>
    </lineage>
</organism>